<proteinExistence type="evidence at protein level"/>
<organism>
    <name type="scientific">Lymantria dispar</name>
    <name type="common">Gypsy moth</name>
    <name type="synonym">Porthetria dispar</name>
    <dbReference type="NCBI Taxonomy" id="13123"/>
    <lineage>
        <taxon>Eukaryota</taxon>
        <taxon>Metazoa</taxon>
        <taxon>Ecdysozoa</taxon>
        <taxon>Arthropoda</taxon>
        <taxon>Hexapoda</taxon>
        <taxon>Insecta</taxon>
        <taxon>Pterygota</taxon>
        <taxon>Neoptera</taxon>
        <taxon>Endopterygota</taxon>
        <taxon>Lepidoptera</taxon>
        <taxon>Glossata</taxon>
        <taxon>Ditrysia</taxon>
        <taxon>Noctuoidea</taxon>
        <taxon>Erebidae</taxon>
        <taxon>Lymantriinae</taxon>
        <taxon>Lymantria</taxon>
    </lineage>
</organism>
<sequence length="21" mass="2475">ISDFDEYEPLNDADNNEVLDF</sequence>
<comment type="function">
    <text>Start or boost ecdysteroid synthesis in testis of larvae and pupae.</text>
</comment>
<protein>
    <recommendedName>
        <fullName>Testis ecdysiotropin peptide 1</fullName>
        <shortName>TE</shortName>
    </recommendedName>
</protein>
<keyword id="KW-0903">Direct protein sequencing</keyword>
<name>ECD1_LYMDI</name>
<evidence type="ECO:0000256" key="1">
    <source>
        <dbReference type="SAM" id="MobiDB-lite"/>
    </source>
</evidence>
<feature type="peptide" id="PRO_0000044134" description="Testis ecdysiotropin peptide 1">
    <location>
        <begin position="1"/>
        <end position="21"/>
    </location>
</feature>
<feature type="region of interest" description="Disordered" evidence="1">
    <location>
        <begin position="1"/>
        <end position="21"/>
    </location>
</feature>
<reference key="1">
    <citation type="journal article" date="1997" name="Arch. Insect Biochem. Physiol.">
        <title>Identification and characterization of an ecdysiotropic peptide from brain extracts of the gipsy moth, Lymantria dispar.</title>
        <authorList>
            <person name="Wagner R.M."/>
            <person name="Loeb M.J."/>
            <person name="Kochansky J.P."/>
            <person name="Gelman D.B."/>
            <person name="Lusby W.R."/>
            <person name="Bell R.A."/>
        </authorList>
    </citation>
    <scope>PROTEIN SEQUENCE</scope>
    <source>
        <tissue>Brain</tissue>
    </source>
</reference>
<accession>P80936</accession>
<accession>P55898</accession>